<protein>
    <recommendedName>
        <fullName evidence="5">DNA mimic protein DMP19</fullName>
    </recommendedName>
    <alternativeName>
        <fullName evidence="5">DNA mimic protein 19 kDa</fullName>
    </alternativeName>
    <alternativeName>
        <fullName evidence="4">Neisseria conserved protein DMP19</fullName>
    </alternativeName>
</protein>
<feature type="chain" id="PRO_0000462352" description="DNA mimic protein DMP19">
    <location>
        <begin position="1"/>
        <end position="165"/>
    </location>
</feature>
<accession>Q9K0P4</accession>
<sequence length="165" mass="18512">MTALTLPEDIRQQEPSALLYTLVSAYLEHTAQTGDESLSCLSDDQHTLTAFCYLDSQVEEGGFVQLIASGYGEYIFRNPLADSLRRWKIKAVPKVLDKAKALYEQHGKTIETLADGGADIPSLRKQFPEFEEWDGAYYEAAEQDLPLLAEHIQSNWETFAHIGQA</sequence>
<dbReference type="EMBL" id="AE002098">
    <property type="protein sequence ID" value="AAF40970.1"/>
    <property type="molecule type" value="Genomic_DNA"/>
</dbReference>
<dbReference type="PIR" id="C81186">
    <property type="entry name" value="C81186"/>
</dbReference>
<dbReference type="RefSeq" id="NP_273586.1">
    <property type="nucleotide sequence ID" value="NC_003112.2"/>
</dbReference>
<dbReference type="RefSeq" id="WP_002225584.1">
    <property type="nucleotide sequence ID" value="NC_003112.2"/>
</dbReference>
<dbReference type="PDB" id="3VJZ">
    <property type="method" value="X-ray"/>
    <property type="resolution" value="1.80 A"/>
    <property type="chains" value="A/B=1-165"/>
</dbReference>
<dbReference type="PDB" id="3WUR">
    <property type="method" value="X-ray"/>
    <property type="resolution" value="1.45 A"/>
    <property type="chains" value="A/B=1-165"/>
</dbReference>
<dbReference type="PDBsum" id="3VJZ"/>
<dbReference type="PDBsum" id="3WUR"/>
<dbReference type="SMR" id="Q9K0P4"/>
<dbReference type="STRING" id="122586.NMB0541"/>
<dbReference type="PaxDb" id="122586-NMB0541"/>
<dbReference type="KEGG" id="nme:NMB0541"/>
<dbReference type="PATRIC" id="fig|122586.8.peg.689"/>
<dbReference type="HOGENOM" id="CLU_107474_1_0_4"/>
<dbReference type="InParanoid" id="Q9K0P4"/>
<dbReference type="OrthoDB" id="8606126at2"/>
<dbReference type="EvolutionaryTrace" id="Q9K0P4"/>
<dbReference type="Proteomes" id="UP000000425">
    <property type="component" value="Chromosome"/>
</dbReference>
<dbReference type="Gene3D" id="1.20.1420.60">
    <property type="match status" value="1"/>
</dbReference>
<dbReference type="InterPro" id="IPR025402">
    <property type="entry name" value="DMP19_C"/>
</dbReference>
<dbReference type="Pfam" id="PF14300">
    <property type="entry name" value="DMP19"/>
    <property type="match status" value="1"/>
</dbReference>
<evidence type="ECO:0000269" key="1">
    <source>
    </source>
</evidence>
<evidence type="ECO:0000269" key="2">
    <source>
    </source>
</evidence>
<evidence type="ECO:0000269" key="3">
    <source>
    </source>
</evidence>
<evidence type="ECO:0000303" key="4">
    <source>
    </source>
</evidence>
<evidence type="ECO:0000303" key="5">
    <source>
    </source>
</evidence>
<evidence type="ECO:0000305" key="6"/>
<evidence type="ECO:0000312" key="7">
    <source>
        <dbReference type="EMBL" id="AAF40970.1"/>
    </source>
</evidence>
<evidence type="ECO:0007744" key="8">
    <source>
        <dbReference type="PDB" id="3VJZ"/>
    </source>
</evidence>
<evidence type="ECO:0007744" key="9">
    <source>
        <dbReference type="PDB" id="3WUR"/>
    </source>
</evidence>
<organism>
    <name type="scientific">Neisseria meningitidis serogroup B (strain ATCC BAA-335 / MC58)</name>
    <dbReference type="NCBI Taxonomy" id="122586"/>
    <lineage>
        <taxon>Bacteria</taxon>
        <taxon>Pseudomonadati</taxon>
        <taxon>Pseudomonadota</taxon>
        <taxon>Betaproteobacteria</taxon>
        <taxon>Neisseriales</taxon>
        <taxon>Neisseriaceae</taxon>
        <taxon>Neisseria</taxon>
    </lineage>
</organism>
<name>DMP19_NEIMB</name>
<comment type="function">
    <text evidence="1 3">Acts as a DNA mimic (PubMed:22373915, PubMed:29220372). Interacts with DNA-binding proteins and prevents their binding to DNA by occupying the DNA binding sites on the proteins, acting as a competitive inhibitor (PubMed:29220372). DMP19 is a bifunctional DNA mimic protein involved in controlling nucleoid formation as well as gene regulation (PubMed:22373915, PubMed:29220372). This bifunctionality depends on different oligomeric states (PubMed:29220372). The monomeric form interacts with the DNA-binding protein HU, which prevents HU from binding to DNA and forming nucleoids (PubMed:29220372). The dimeric form interacts with the Neisseria hypothetical transcription factor (NHTF) and prevents NHTF from binding to its DNA-binding sites, thereby blocking its repressor activity and influencing expression of the target genes (PubMed:22373915). DMP19 might use these different oligomerizations to regulate genes in two steps: the monomeric form may first release selected gene regions in chromosomal DNA by preventing HU from binding to DNA and forming nucleoids, then the dimeric form blocks the gene repressor activity of NHTF and ensures the continued expression of NHTF-controlled genes (PubMed:29220372).</text>
</comment>
<comment type="activity regulation">
    <text evidence="2">Activity can be modulated in vitro by crown ethers, which are small cyclic polyethers that can modify protein surface behavior dramatically by stabilizing either intra- or intermolecular interactions, thereby probably altering the protein's tertiary and quaternary structure.</text>
</comment>
<comment type="subunit">
    <text evidence="1 2 3">Monomer (PubMed:25287606, PubMed:29220372). Homodimer (PubMed:22373915, PubMed:25287606). The monomeric form of DMP19 interacts with the DNA-binding protein HU homodimer with 1:1 stoichiometry (PubMed:29220372). The dimeric form of DMP19 interacts with the Neisseria hypothetical transcription factor (NHTF) dimer (PubMed:22373915).</text>
</comment>
<comment type="domain">
    <text evidence="1">The dimer exhibits a double-stranded DNA-like negative charge distribution on its surface, which facilitates interaction with DNA-binding proteins.</text>
</comment>
<comment type="similarity">
    <text evidence="6">Belongs to the DMP19-like protein family.</text>
</comment>
<proteinExistence type="evidence at protein level"/>
<reference evidence="7" key="1">
    <citation type="journal article" date="2000" name="Science">
        <title>Complete genome sequence of Neisseria meningitidis serogroup B strain MC58.</title>
        <authorList>
            <person name="Tettelin H."/>
            <person name="Saunders N.J."/>
            <person name="Heidelberg J.F."/>
            <person name="Jeffries A.C."/>
            <person name="Nelson K.E."/>
            <person name="Eisen J.A."/>
            <person name="Ketchum K.A."/>
            <person name="Hood D.W."/>
            <person name="Peden J.F."/>
            <person name="Dodson R.J."/>
            <person name="Nelson W.C."/>
            <person name="Gwinn M.L."/>
            <person name="DeBoy R.T."/>
            <person name="Peterson J.D."/>
            <person name="Hickey E.K."/>
            <person name="Haft D.H."/>
            <person name="Salzberg S.L."/>
            <person name="White O."/>
            <person name="Fleischmann R.D."/>
            <person name="Dougherty B.A."/>
            <person name="Mason T.M."/>
            <person name="Ciecko A."/>
            <person name="Parksey D.S."/>
            <person name="Blair E."/>
            <person name="Cittone H."/>
            <person name="Clark E.B."/>
            <person name="Cotton M.D."/>
            <person name="Utterback T.R."/>
            <person name="Khouri H.M."/>
            <person name="Qin H."/>
            <person name="Vamathevan J.J."/>
            <person name="Gill J."/>
            <person name="Scarlato V."/>
            <person name="Masignani V."/>
            <person name="Pizza M."/>
            <person name="Grandi G."/>
            <person name="Sun L."/>
            <person name="Smith H.O."/>
            <person name="Fraser C.M."/>
            <person name="Moxon E.R."/>
            <person name="Rappuoli R."/>
            <person name="Venter J.C."/>
        </authorList>
    </citation>
    <scope>NUCLEOTIDE SEQUENCE [LARGE SCALE GENOMIC DNA]</scope>
    <source>
        <strain>ATCC BAA-335 / MC58</strain>
    </source>
</reference>
<reference key="2">
    <citation type="journal article" date="2017" name="PLoS ONE">
        <title>The monomeric form of Neisseria DNA mimic protein DMP19 prevents DNA from binding to the histone-like HU protein.</title>
        <authorList>
            <person name="Huang M.F."/>
            <person name="Lin S.J."/>
            <person name="Ko T.P."/>
            <person name="Liao Y.T."/>
            <person name="Hsu K.C."/>
            <person name="Wang H.C."/>
        </authorList>
    </citation>
    <scope>FUNCTION</scope>
    <scope>SUBUNIT</scope>
    <scope>INTERACTION WITH PROTEIN HU</scope>
    <source>
        <strain>ATCC BAA-335 / MC58</strain>
    </source>
</reference>
<reference evidence="8" key="3">
    <citation type="journal article" date="2012" name="Nucleic Acids Res.">
        <title>Neisseria conserved protein DMP19 is a DNA mimic protein that prevents DNA binding to a hypothetical nitrogen-response transcription factor.</title>
        <authorList>
            <person name="Wang H.C."/>
            <person name="Ko T.P."/>
            <person name="Wu M.L."/>
            <person name="Ku S.C."/>
            <person name="Wu H.J."/>
            <person name="Wang A.H."/>
        </authorList>
    </citation>
    <scope>X-RAY CRYSTALLOGRAPHY (1.80 ANGSTROMS)</scope>
    <scope>FUNCTION</scope>
    <scope>SUBUNIT</scope>
    <scope>INTERACTION WITH NHTF</scope>
    <scope>DOMAIN</scope>
    <source>
        <strain>ATCC BAA-335 / MC58</strain>
    </source>
</reference>
<reference evidence="9" key="4">
    <citation type="journal article" date="2014" name="Angew. Chem. Int. Ed.">
        <title>Crowning proteins: modulating the protein surface properties using crown ethers.</title>
        <authorList>
            <person name="Lee C.C."/>
            <person name="Maestre-Reyna M."/>
            <person name="Hsu K.C."/>
            <person name="Wang H.C."/>
            <person name="Liu C.I."/>
            <person name="Jeng W.Y."/>
            <person name="Lin L.L."/>
            <person name="Wood R."/>
            <person name="Chou C.C."/>
            <person name="Yang J.M."/>
            <person name="Wang A.H."/>
        </authorList>
    </citation>
    <scope>X-RAY CRYSTALLOGRAPHY (1.45 ANGSTROMS)</scope>
    <scope>ACTIVITY REGULATION</scope>
    <scope>SUBUNIT</scope>
</reference>
<gene>
    <name evidence="7" type="ordered locus">NMB0541</name>
</gene>
<keyword id="KW-0002">3D-structure</keyword>
<keyword id="KW-1185">Reference proteome</keyword>